<evidence type="ECO:0000250" key="1">
    <source>
        <dbReference type="UniProtKB" id="P05745"/>
    </source>
</evidence>
<evidence type="ECO:0000269" key="2">
    <source>
    </source>
</evidence>
<evidence type="ECO:0000305" key="3"/>
<protein>
    <recommendedName>
        <fullName evidence="3">Large ribosomal subunit protein eL36A</fullName>
    </recommendedName>
    <alternativeName>
        <fullName>60S ribosomal protein L36-A</fullName>
    </alternativeName>
</protein>
<gene>
    <name type="primary">rpl3601</name>
    <name type="synonym">rpl36</name>
    <name type="synonym">rpl36a</name>
    <name type="ORF">SPCC970.05</name>
</gene>
<dbReference type="EMBL" id="CU329672">
    <property type="protein sequence ID" value="CAA20698.1"/>
    <property type="molecule type" value="Genomic_DNA"/>
</dbReference>
<dbReference type="EMBL" id="D88771">
    <property type="protein sequence ID" value="BAA13701.1"/>
    <property type="molecule type" value="mRNA"/>
</dbReference>
<dbReference type="PIR" id="T41675">
    <property type="entry name" value="T43238"/>
</dbReference>
<dbReference type="RefSeq" id="NP_587850.1">
    <property type="nucleotide sequence ID" value="NM_001022843.2"/>
</dbReference>
<dbReference type="SMR" id="Q92365"/>
<dbReference type="BioGRID" id="275461">
    <property type="interactions" value="8"/>
</dbReference>
<dbReference type="FunCoup" id="Q92365">
    <property type="interactions" value="437"/>
</dbReference>
<dbReference type="IntAct" id="Q92365">
    <property type="interactions" value="2"/>
</dbReference>
<dbReference type="STRING" id="284812.Q92365"/>
<dbReference type="iPTMnet" id="Q92365"/>
<dbReference type="PaxDb" id="4896-SPCC970.05.1"/>
<dbReference type="EnsemblFungi" id="SPCC970.05.1">
    <property type="protein sequence ID" value="SPCC970.05.1:pep"/>
    <property type="gene ID" value="SPCC970.05"/>
</dbReference>
<dbReference type="GeneID" id="2538883"/>
<dbReference type="KEGG" id="spo:2538883"/>
<dbReference type="PomBase" id="SPCC970.05">
    <property type="gene designation" value="rpl3601"/>
</dbReference>
<dbReference type="VEuPathDB" id="FungiDB:SPCC970.05"/>
<dbReference type="eggNOG" id="KOG3452">
    <property type="taxonomic scope" value="Eukaryota"/>
</dbReference>
<dbReference type="HOGENOM" id="CLU_140672_0_0_1"/>
<dbReference type="InParanoid" id="Q92365"/>
<dbReference type="OMA" id="WGINRGH"/>
<dbReference type="PhylomeDB" id="Q92365"/>
<dbReference type="Reactome" id="R-SPO-156827">
    <property type="pathway name" value="L13a-mediated translational silencing of Ceruloplasmin expression"/>
</dbReference>
<dbReference type="Reactome" id="R-SPO-1799339">
    <property type="pathway name" value="SRP-dependent cotranslational protein targeting to membrane"/>
</dbReference>
<dbReference type="Reactome" id="R-SPO-72689">
    <property type="pathway name" value="Formation of a pool of free 40S subunits"/>
</dbReference>
<dbReference type="Reactome" id="R-SPO-72706">
    <property type="pathway name" value="GTP hydrolysis and joining of the 60S ribosomal subunit"/>
</dbReference>
<dbReference type="Reactome" id="R-SPO-975956">
    <property type="pathway name" value="Nonsense Mediated Decay (NMD) independent of the Exon Junction Complex (EJC)"/>
</dbReference>
<dbReference type="Reactome" id="R-SPO-975957">
    <property type="pathway name" value="Nonsense Mediated Decay (NMD) enhanced by the Exon Junction Complex (EJC)"/>
</dbReference>
<dbReference type="PRO" id="PR:Q92365"/>
<dbReference type="Proteomes" id="UP000002485">
    <property type="component" value="Chromosome III"/>
</dbReference>
<dbReference type="GO" id="GO:0005829">
    <property type="term" value="C:cytosol"/>
    <property type="evidence" value="ECO:0007005"/>
    <property type="project" value="PomBase"/>
</dbReference>
<dbReference type="GO" id="GO:0022625">
    <property type="term" value="C:cytosolic large ribosomal subunit"/>
    <property type="evidence" value="ECO:0000318"/>
    <property type="project" value="GO_Central"/>
</dbReference>
<dbReference type="GO" id="GO:0030684">
    <property type="term" value="C:preribosome"/>
    <property type="evidence" value="ECO:0000314"/>
    <property type="project" value="PomBase"/>
</dbReference>
<dbReference type="GO" id="GO:0003735">
    <property type="term" value="F:structural constituent of ribosome"/>
    <property type="evidence" value="ECO:0000318"/>
    <property type="project" value="GO_Central"/>
</dbReference>
<dbReference type="GO" id="GO:0002181">
    <property type="term" value="P:cytoplasmic translation"/>
    <property type="evidence" value="ECO:0000318"/>
    <property type="project" value="GO_Central"/>
</dbReference>
<dbReference type="FunFam" id="1.10.10.1760:FF:000003">
    <property type="entry name" value="60S ribosomal protein L36"/>
    <property type="match status" value="1"/>
</dbReference>
<dbReference type="Gene3D" id="1.10.10.1760">
    <property type="entry name" value="60S ribosomal protein L36"/>
    <property type="match status" value="1"/>
</dbReference>
<dbReference type="InterPro" id="IPR000509">
    <property type="entry name" value="Ribosomal_eL36"/>
</dbReference>
<dbReference type="InterPro" id="IPR038097">
    <property type="entry name" value="Ribosomal_eL36_sf"/>
</dbReference>
<dbReference type="PANTHER" id="PTHR10114">
    <property type="entry name" value="60S RIBOSOMAL PROTEIN L36"/>
    <property type="match status" value="1"/>
</dbReference>
<dbReference type="Pfam" id="PF01158">
    <property type="entry name" value="Ribosomal_L36e"/>
    <property type="match status" value="1"/>
</dbReference>
<dbReference type="PROSITE" id="PS01190">
    <property type="entry name" value="RIBOSOMAL_L36E"/>
    <property type="match status" value="1"/>
</dbReference>
<comment type="function">
    <text evidence="1">Component of the ribosome, a large ribonucleoprotein complex responsible for the synthesis of proteins in the cell. The small ribosomal subunit (SSU) binds messenger RNAs (mRNAs) and translates the encoded message by selecting cognate aminoacyl-transfer RNA (tRNA) molecules. The large subunit (LSU) contains the ribosomal catalytic site termed the peptidyl transferase center (PTC), which catalyzes the formation of peptide bonds, thereby polymerizing the amino acids delivered by tRNAs into a polypeptide chain. The nascent polypeptides leave the ribosome through a tunnel in the LSU and interact with protein factors that function in enzymatic processing, targeting, and the membrane insertion of nascent chains at the exit of the ribosomal tunnel.</text>
</comment>
<comment type="subunit">
    <text evidence="1">Component of the large ribosomal subunit (LSU). Mature yeast ribosomes consist of a small (40S) and a large (60S) subunit. The 40S small subunit contains 1 molecule of ribosomal RNA (18S rRNA) and at least 33 different proteins. The large 60S subunit contains 3 rRNA molecules (25S, 5.8S and 5S rRNA) and at least 46 different proteins.</text>
</comment>
<comment type="subcellular location">
    <subcellularLocation>
        <location evidence="2">Cytoplasm</location>
    </subcellularLocation>
</comment>
<comment type="miscellaneous">
    <text>There are 2 genes for eL36 in S.pombe.</text>
</comment>
<comment type="similarity">
    <text evidence="3">Belongs to the eukaryotic ribosomal protein eL36 family.</text>
</comment>
<reference key="1">
    <citation type="journal article" date="2002" name="Nature">
        <title>The genome sequence of Schizosaccharomyces pombe.</title>
        <authorList>
            <person name="Wood V."/>
            <person name="Gwilliam R."/>
            <person name="Rajandream M.A."/>
            <person name="Lyne M.H."/>
            <person name="Lyne R."/>
            <person name="Stewart A."/>
            <person name="Sgouros J.G."/>
            <person name="Peat N."/>
            <person name="Hayles J."/>
            <person name="Baker S.G."/>
            <person name="Basham D."/>
            <person name="Bowman S."/>
            <person name="Brooks K."/>
            <person name="Brown D."/>
            <person name="Brown S."/>
            <person name="Chillingworth T."/>
            <person name="Churcher C.M."/>
            <person name="Collins M."/>
            <person name="Connor R."/>
            <person name="Cronin A."/>
            <person name="Davis P."/>
            <person name="Feltwell T."/>
            <person name="Fraser A."/>
            <person name="Gentles S."/>
            <person name="Goble A."/>
            <person name="Hamlin N."/>
            <person name="Harris D.E."/>
            <person name="Hidalgo J."/>
            <person name="Hodgson G."/>
            <person name="Holroyd S."/>
            <person name="Hornsby T."/>
            <person name="Howarth S."/>
            <person name="Huckle E.J."/>
            <person name="Hunt S."/>
            <person name="Jagels K."/>
            <person name="James K.D."/>
            <person name="Jones L."/>
            <person name="Jones M."/>
            <person name="Leather S."/>
            <person name="McDonald S."/>
            <person name="McLean J."/>
            <person name="Mooney P."/>
            <person name="Moule S."/>
            <person name="Mungall K.L."/>
            <person name="Murphy L.D."/>
            <person name="Niblett D."/>
            <person name="Odell C."/>
            <person name="Oliver K."/>
            <person name="O'Neil S."/>
            <person name="Pearson D."/>
            <person name="Quail M.A."/>
            <person name="Rabbinowitsch E."/>
            <person name="Rutherford K.M."/>
            <person name="Rutter S."/>
            <person name="Saunders D."/>
            <person name="Seeger K."/>
            <person name="Sharp S."/>
            <person name="Skelton J."/>
            <person name="Simmonds M.N."/>
            <person name="Squares R."/>
            <person name="Squares S."/>
            <person name="Stevens K."/>
            <person name="Taylor K."/>
            <person name="Taylor R.G."/>
            <person name="Tivey A."/>
            <person name="Walsh S.V."/>
            <person name="Warren T."/>
            <person name="Whitehead S."/>
            <person name="Woodward J.R."/>
            <person name="Volckaert G."/>
            <person name="Aert R."/>
            <person name="Robben J."/>
            <person name="Grymonprez B."/>
            <person name="Weltjens I."/>
            <person name="Vanstreels E."/>
            <person name="Rieger M."/>
            <person name="Schaefer M."/>
            <person name="Mueller-Auer S."/>
            <person name="Gabel C."/>
            <person name="Fuchs M."/>
            <person name="Duesterhoeft A."/>
            <person name="Fritzc C."/>
            <person name="Holzer E."/>
            <person name="Moestl D."/>
            <person name="Hilbert H."/>
            <person name="Borzym K."/>
            <person name="Langer I."/>
            <person name="Beck A."/>
            <person name="Lehrach H."/>
            <person name="Reinhardt R."/>
            <person name="Pohl T.M."/>
            <person name="Eger P."/>
            <person name="Zimmermann W."/>
            <person name="Wedler H."/>
            <person name="Wambutt R."/>
            <person name="Purnelle B."/>
            <person name="Goffeau A."/>
            <person name="Cadieu E."/>
            <person name="Dreano S."/>
            <person name="Gloux S."/>
            <person name="Lelaure V."/>
            <person name="Mottier S."/>
            <person name="Galibert F."/>
            <person name="Aves S.J."/>
            <person name="Xiang Z."/>
            <person name="Hunt C."/>
            <person name="Moore K."/>
            <person name="Hurst S.M."/>
            <person name="Lucas M."/>
            <person name="Rochet M."/>
            <person name="Gaillardin C."/>
            <person name="Tallada V.A."/>
            <person name="Garzon A."/>
            <person name="Thode G."/>
            <person name="Daga R.R."/>
            <person name="Cruzado L."/>
            <person name="Jimenez J."/>
            <person name="Sanchez M."/>
            <person name="del Rey F."/>
            <person name="Benito J."/>
            <person name="Dominguez A."/>
            <person name="Revuelta J.L."/>
            <person name="Moreno S."/>
            <person name="Armstrong J."/>
            <person name="Forsburg S.L."/>
            <person name="Cerutti L."/>
            <person name="Lowe T."/>
            <person name="McCombie W.R."/>
            <person name="Paulsen I."/>
            <person name="Potashkin J."/>
            <person name="Shpakovski G.V."/>
            <person name="Ussery D."/>
            <person name="Barrell B.G."/>
            <person name="Nurse P."/>
        </authorList>
    </citation>
    <scope>NUCLEOTIDE SEQUENCE [LARGE SCALE GENOMIC DNA]</scope>
    <source>
        <strain>972 / ATCC 24843</strain>
    </source>
</reference>
<reference key="2">
    <citation type="submission" date="1996-11" db="EMBL/GenBank/DDBJ databases">
        <title>S.pombe ribosomal protein L39 homolog.</title>
        <authorList>
            <person name="Kawamukai M."/>
        </authorList>
    </citation>
    <scope>NUCLEOTIDE SEQUENCE [MRNA] OF 7-99</scope>
</reference>
<reference key="3">
    <citation type="journal article" date="2006" name="Nat. Biotechnol.">
        <title>ORFeome cloning and global analysis of protein localization in the fission yeast Schizosaccharomyces pombe.</title>
        <authorList>
            <person name="Matsuyama A."/>
            <person name="Arai R."/>
            <person name="Yashiroda Y."/>
            <person name="Shirai A."/>
            <person name="Kamata A."/>
            <person name="Sekido S."/>
            <person name="Kobayashi Y."/>
            <person name="Hashimoto A."/>
            <person name="Hamamoto M."/>
            <person name="Hiraoka Y."/>
            <person name="Horinouchi S."/>
            <person name="Yoshida M."/>
        </authorList>
    </citation>
    <scope>SUBCELLULAR LOCATION [LARGE SCALE ANALYSIS]</scope>
</reference>
<sequence>MAPGLVVGLNKGKVLTKRQLPERPSRRKGQLSKRTSFVRSIVREVAGFAPYERRVMELIRNSQDKRARKLAKKRLGTLKRAKGKIEELTSVIQSSRLAH</sequence>
<keyword id="KW-0963">Cytoplasm</keyword>
<keyword id="KW-1185">Reference proteome</keyword>
<keyword id="KW-0687">Ribonucleoprotein</keyword>
<keyword id="KW-0689">Ribosomal protein</keyword>
<proteinExistence type="inferred from homology"/>
<organism>
    <name type="scientific">Schizosaccharomyces pombe (strain 972 / ATCC 24843)</name>
    <name type="common">Fission yeast</name>
    <dbReference type="NCBI Taxonomy" id="284812"/>
    <lineage>
        <taxon>Eukaryota</taxon>
        <taxon>Fungi</taxon>
        <taxon>Dikarya</taxon>
        <taxon>Ascomycota</taxon>
        <taxon>Taphrinomycotina</taxon>
        <taxon>Schizosaccharomycetes</taxon>
        <taxon>Schizosaccharomycetales</taxon>
        <taxon>Schizosaccharomycetaceae</taxon>
        <taxon>Schizosaccharomyces</taxon>
    </lineage>
</organism>
<feature type="chain" id="PRO_0000195018" description="Large ribosomal subunit protein eL36A">
    <location>
        <begin position="1"/>
        <end position="99"/>
    </location>
</feature>
<name>RL36A_SCHPO</name>
<accession>Q92365</accession>